<keyword id="KW-0325">Glycoprotein</keyword>
<keyword id="KW-0349">Heme</keyword>
<keyword id="KW-0408">Iron</keyword>
<keyword id="KW-0472">Membrane</keyword>
<keyword id="KW-0479">Metal-binding</keyword>
<keyword id="KW-0503">Monooxygenase</keyword>
<keyword id="KW-0560">Oxidoreductase</keyword>
<keyword id="KW-0812">Transmembrane</keyword>
<keyword id="KW-1133">Transmembrane helix</keyword>
<sequence length="506" mass="57788">MDTSTSFPSLFLPTLCTILISYIIIKYVLIWNRSSMAAFNLPPSPPKLPIIGNIHHVFSKNVNQTLWKLSKKYGPVMLIDTGAKSFLVVSSSQMAMEVLKTHQEILSTRPSNEGTKRLSYNFSDITFSPHGDHWRDMRKVFVNEFLGPKRAGWFNQVLRMEIKDVINNLSSNPLNTSINLNEMLLSLVYRVVCKFAFGKSYREEPFNGVTLKEMLDESMVVLAGSSADMFPTFGWILDKLYGWNDRLEKCFGNLDGFFEMIINEHLQSASETSEDEKDFVHSLVELSLKDPQFTKDYIKALLLNVLLGAIDTTFTTIVWAMSEIVKNTQVMQKLQTEIRSCIGRKEEVDATDLTNMAYLKMVIKETLRLHPPAPLLFPRECPSHCKIGGYDVFPGTCVVMNGWGIARDPNVWKEIPNEFYPERFENFNIDFLGNHCEMIPFGAGRRSCPGMKSATSTIEFTLVNLLYWFDWEVPSGMNNQDLDMEEDGFLVIQKKSPLFLIPIKHI</sequence>
<evidence type="ECO:0000250" key="1">
    <source>
        <dbReference type="UniProtKB" id="P04798"/>
    </source>
</evidence>
<evidence type="ECO:0000255" key="2"/>
<evidence type="ECO:0000255" key="3">
    <source>
        <dbReference type="PROSITE-ProRule" id="PRU00498"/>
    </source>
</evidence>
<evidence type="ECO:0000269" key="4">
    <source>
    </source>
</evidence>
<evidence type="ECO:0000303" key="5">
    <source>
    </source>
</evidence>
<evidence type="ECO:0000303" key="6">
    <source>
    </source>
</evidence>
<evidence type="ECO:0000305" key="7"/>
<accession>X2EVV9</accession>
<proteinExistence type="evidence at protein level"/>
<organism>
    <name type="scientific">Tanacetum parthenium</name>
    <name type="common">Feverfew</name>
    <name type="synonym">Matricaria parthenium</name>
    <dbReference type="NCBI Taxonomy" id="127999"/>
    <lineage>
        <taxon>Eukaryota</taxon>
        <taxon>Viridiplantae</taxon>
        <taxon>Streptophyta</taxon>
        <taxon>Embryophyta</taxon>
        <taxon>Tracheophyta</taxon>
        <taxon>Spermatophyta</taxon>
        <taxon>Magnoliopsida</taxon>
        <taxon>eudicotyledons</taxon>
        <taxon>Gunneridae</taxon>
        <taxon>Pentapetalae</taxon>
        <taxon>asterids</taxon>
        <taxon>campanulids</taxon>
        <taxon>Asterales</taxon>
        <taxon>Asteraceae</taxon>
        <taxon>Asteroideae</taxon>
        <taxon>Anthemideae</taxon>
        <taxon>Anthemidinae</taxon>
        <taxon>Tanacetum</taxon>
    </lineage>
</organism>
<dbReference type="EC" id="1.14.14.-" evidence="4"/>
<dbReference type="EMBL" id="KC954155">
    <property type="protein sequence ID" value="AHM24033.1"/>
    <property type="molecule type" value="mRNA"/>
</dbReference>
<dbReference type="SMR" id="X2EVV9"/>
<dbReference type="GlyCosmos" id="X2EVV9">
    <property type="glycosylation" value="5 sites, No reported glycans"/>
</dbReference>
<dbReference type="UniPathway" id="UPA00213"/>
<dbReference type="GO" id="GO:0016020">
    <property type="term" value="C:membrane"/>
    <property type="evidence" value="ECO:0007669"/>
    <property type="project" value="UniProtKB-SubCell"/>
</dbReference>
<dbReference type="GO" id="GO:0020037">
    <property type="term" value="F:heme binding"/>
    <property type="evidence" value="ECO:0007669"/>
    <property type="project" value="InterPro"/>
</dbReference>
<dbReference type="GO" id="GO:0005506">
    <property type="term" value="F:iron ion binding"/>
    <property type="evidence" value="ECO:0007669"/>
    <property type="project" value="InterPro"/>
</dbReference>
<dbReference type="GO" id="GO:0102626">
    <property type="term" value="F:parthenolide synthase activity"/>
    <property type="evidence" value="ECO:0000314"/>
    <property type="project" value="UniProtKB"/>
</dbReference>
<dbReference type="GO" id="GO:0051762">
    <property type="term" value="P:sesquiterpene biosynthetic process"/>
    <property type="evidence" value="ECO:0000314"/>
    <property type="project" value="UniProtKB"/>
</dbReference>
<dbReference type="GO" id="GO:0016114">
    <property type="term" value="P:terpenoid biosynthetic process"/>
    <property type="evidence" value="ECO:0007669"/>
    <property type="project" value="UniProtKB-UniPathway"/>
</dbReference>
<dbReference type="CDD" id="cd11072">
    <property type="entry name" value="CYP71-like"/>
    <property type="match status" value="1"/>
</dbReference>
<dbReference type="FunFam" id="1.10.630.10:FF:000011">
    <property type="entry name" value="Cytochrome P450 83B1"/>
    <property type="match status" value="1"/>
</dbReference>
<dbReference type="Gene3D" id="1.10.630.10">
    <property type="entry name" value="Cytochrome P450"/>
    <property type="match status" value="1"/>
</dbReference>
<dbReference type="InterPro" id="IPR001128">
    <property type="entry name" value="Cyt_P450"/>
</dbReference>
<dbReference type="InterPro" id="IPR017972">
    <property type="entry name" value="Cyt_P450_CS"/>
</dbReference>
<dbReference type="InterPro" id="IPR002401">
    <property type="entry name" value="Cyt_P450_E_grp-I"/>
</dbReference>
<dbReference type="InterPro" id="IPR036396">
    <property type="entry name" value="Cyt_P450_sf"/>
</dbReference>
<dbReference type="PANTHER" id="PTHR47955">
    <property type="entry name" value="CYTOCHROME P450 FAMILY 71 PROTEIN"/>
    <property type="match status" value="1"/>
</dbReference>
<dbReference type="PANTHER" id="PTHR47955:SF9">
    <property type="entry name" value="PREMNASPIRODIENE OXYGENASE-LIKE"/>
    <property type="match status" value="1"/>
</dbReference>
<dbReference type="Pfam" id="PF00067">
    <property type="entry name" value="p450"/>
    <property type="match status" value="1"/>
</dbReference>
<dbReference type="PRINTS" id="PR00463">
    <property type="entry name" value="EP450I"/>
</dbReference>
<dbReference type="PRINTS" id="PR00385">
    <property type="entry name" value="P450"/>
</dbReference>
<dbReference type="SUPFAM" id="SSF48264">
    <property type="entry name" value="Cytochrome P450"/>
    <property type="match status" value="1"/>
</dbReference>
<dbReference type="PROSITE" id="PS00086">
    <property type="entry name" value="CYTOCHROME_P450"/>
    <property type="match status" value="1"/>
</dbReference>
<feature type="chain" id="PRO_0000448398" description="Parthenolide synthase">
    <location>
        <begin position="1"/>
        <end position="506"/>
    </location>
</feature>
<feature type="transmembrane region" description="Helical" evidence="2">
    <location>
        <begin position="10"/>
        <end position="30"/>
    </location>
</feature>
<feature type="transmembrane region" description="Helical" evidence="2">
    <location>
        <begin position="301"/>
        <end position="321"/>
    </location>
</feature>
<feature type="binding site" description="axial binding residue" evidence="1">
    <location>
        <position position="448"/>
    </location>
    <ligand>
        <name>heme</name>
        <dbReference type="ChEBI" id="CHEBI:30413"/>
    </ligand>
    <ligandPart>
        <name>Fe</name>
        <dbReference type="ChEBI" id="CHEBI:18248"/>
    </ligandPart>
</feature>
<feature type="glycosylation site" description="N-linked (GlcNAc...) asparagine" evidence="3">
    <location>
        <position position="32"/>
    </location>
</feature>
<feature type="glycosylation site" description="N-linked (GlcNAc...) asparagine" evidence="3">
    <location>
        <position position="63"/>
    </location>
</feature>
<feature type="glycosylation site" description="N-linked (GlcNAc...) asparagine" evidence="3">
    <location>
        <position position="121"/>
    </location>
</feature>
<feature type="glycosylation site" description="N-linked (GlcNAc...) asparagine" evidence="3">
    <location>
        <position position="168"/>
    </location>
</feature>
<feature type="glycosylation site" description="N-linked (GlcNAc...) asparagine" evidence="3">
    <location>
        <position position="175"/>
    </location>
</feature>
<name>C71A1_TANPA</name>
<gene>
    <name evidence="5" type="primary">CYP71CA1</name>
    <name evidence="5" type="synonym">PTS</name>
</gene>
<protein>
    <recommendedName>
        <fullName evidence="5">Parthenolide synthase</fullName>
        <shortName evidence="5">Tp2116</shortName>
        <shortName evidence="5">TpPTS</shortName>
        <ecNumber evidence="4">1.14.14.-</ecNumber>
    </recommendedName>
    <alternativeName>
        <fullName evidence="7">Cytochrome P450 71CA1</fullName>
    </alternativeName>
</protein>
<comment type="function">
    <text evidence="4 6">Involved in the biosynthesis of germacrene-derived sesquiterpene lactones (PubMed:30468448). Component of the parthenolide biosynthetic pathway; parthenolide and conjugates are promising anti-cancer drugs highly active against colon cancer cells (PubMed:30468448). Catalyzes the conversion of costunolide to parthenolide (PubMed:24704560).</text>
</comment>
<comment type="catalytic activity">
    <reaction evidence="4">
        <text>(+)-costunolide + reduced [NADPH--hemoprotein reductase] + O2 = parthenolide + oxidized [NADPH--hemoprotein reductase] + H2O + H(+)</text>
        <dbReference type="Rhea" id="RHEA:61320"/>
        <dbReference type="Rhea" id="RHEA-COMP:11964"/>
        <dbReference type="Rhea" id="RHEA-COMP:11965"/>
        <dbReference type="ChEBI" id="CHEBI:3900"/>
        <dbReference type="ChEBI" id="CHEBI:7939"/>
        <dbReference type="ChEBI" id="CHEBI:15377"/>
        <dbReference type="ChEBI" id="CHEBI:15378"/>
        <dbReference type="ChEBI" id="CHEBI:15379"/>
        <dbReference type="ChEBI" id="CHEBI:57618"/>
        <dbReference type="ChEBI" id="CHEBI:58210"/>
    </reaction>
    <physiologicalReaction direction="left-to-right" evidence="4">
        <dbReference type="Rhea" id="RHEA:61321"/>
    </physiologicalReaction>
</comment>
<comment type="pathway">
    <text evidence="6">Secondary metabolite biosynthesis; terpenoid biosynthesis.</text>
</comment>
<comment type="subcellular location">
    <subcellularLocation>
        <location evidence="2">Membrane</location>
        <topology evidence="2">Multi-pass membrane protein</topology>
    </subcellularLocation>
</comment>
<comment type="developmental stage">
    <text evidence="4">During ovary development, accumulates until the stage 3 and fades out progressively to disappear at stage 6.</text>
</comment>
<comment type="similarity">
    <text evidence="7">Belongs to the cytochrome P450 family.</text>
</comment>
<reference key="1">
    <citation type="journal article" date="2014" name="Metab. Eng.">
        <title>Elucidation and in planta reconstitution of the parthenolide biosynthetic pathway.</title>
        <authorList>
            <person name="Liu Q."/>
            <person name="Manzano D."/>
            <person name="Tanic N."/>
            <person name="Pesic M."/>
            <person name="Bankovic J."/>
            <person name="Pateraki I."/>
            <person name="Ricard L."/>
            <person name="Ferrer A."/>
            <person name="de Vos R."/>
            <person name="van de Krol S."/>
            <person name="Bouwmeester H."/>
        </authorList>
    </citation>
    <scope>NUCLEOTIDE SEQUENCE [MRNA]</scope>
    <scope>FUNCTION</scope>
    <scope>CATALYTIC ACTIVITY</scope>
    <scope>DEVELOPMENTAL STAGE</scope>
</reference>
<reference key="2">
    <citation type="journal article" date="2019" name="Nat. Prod. Rep.">
        <title>Non-volatile natural products in plant glandular trichomes: chemistry, biological activities and biosynthesis.</title>
        <authorList>
            <person name="Liu Y."/>
            <person name="Jing S.-X."/>
            <person name="Luo S.-H."/>
            <person name="Li S.-H."/>
        </authorList>
    </citation>
    <scope>PATHWAY</scope>
    <scope>REVIEW</scope>
</reference>